<name>PTV3B_DICCH</name>
<proteinExistence type="inferred from homology"/>
<feature type="chain" id="PRO_0000186482" description="PTS system beta-glucoside-specific EIIBCA component">
    <location>
        <begin position="1"/>
        <end position="631"/>
    </location>
</feature>
<feature type="transmembrane region" description="Helical" evidence="4">
    <location>
        <begin position="120"/>
        <end position="140"/>
    </location>
</feature>
<feature type="transmembrane region" description="Helical" evidence="4">
    <location>
        <begin position="146"/>
        <end position="166"/>
    </location>
</feature>
<feature type="transmembrane region" description="Helical" evidence="4">
    <location>
        <begin position="175"/>
        <end position="195"/>
    </location>
</feature>
<feature type="transmembrane region" description="Helical" evidence="4">
    <location>
        <begin position="206"/>
        <end position="226"/>
    </location>
</feature>
<feature type="transmembrane region" description="Helical" evidence="4">
    <location>
        <begin position="248"/>
        <end position="268"/>
    </location>
</feature>
<feature type="transmembrane region" description="Helical" evidence="4">
    <location>
        <begin position="295"/>
        <end position="315"/>
    </location>
</feature>
<feature type="transmembrane region" description="Helical" evidence="4">
    <location>
        <begin position="328"/>
        <end position="348"/>
    </location>
</feature>
<feature type="transmembrane region" description="Helical" evidence="4">
    <location>
        <begin position="358"/>
        <end position="378"/>
    </location>
</feature>
<feature type="transmembrane region" description="Helical" evidence="4">
    <location>
        <begin position="385"/>
        <end position="405"/>
    </location>
</feature>
<feature type="transmembrane region" description="Helical" evidence="4">
    <location>
        <begin position="434"/>
        <end position="454"/>
    </location>
</feature>
<feature type="domain" description="PTS EIIB type-1" evidence="3">
    <location>
        <begin position="1"/>
        <end position="86"/>
    </location>
</feature>
<feature type="domain" description="PTS EIIC type-1" evidence="4">
    <location>
        <begin position="105"/>
        <end position="466"/>
    </location>
</feature>
<feature type="domain" description="PTS EIIA type-1" evidence="2">
    <location>
        <begin position="501"/>
        <end position="605"/>
    </location>
</feature>
<feature type="active site" description="Phosphocysteine intermediate; for EIIB activity" evidence="3">
    <location>
        <position position="26"/>
    </location>
</feature>
<feature type="active site" description="Tele-phosphohistidine intermediate; for EIIA activity" evidence="2">
    <location>
        <position position="553"/>
    </location>
</feature>
<protein>
    <recommendedName>
        <fullName>PTS system beta-glucoside-specific EIIBCA component</fullName>
    </recommendedName>
    <alternativeName>
        <fullName>EIIBCA-Bgl</fullName>
        <shortName>EII-Bgl</shortName>
    </alternativeName>
    <domain>
        <recommendedName>
            <fullName>Beta-glucoside-specific phosphotransferase enzyme IIB component</fullName>
            <ecNumber>2.7.1.-</ecNumber>
        </recommendedName>
        <alternativeName>
            <fullName>PTS system beta-glucoside-specific EIIB component</fullName>
        </alternativeName>
    </domain>
    <domain>
        <recommendedName>
            <fullName>Beta-glucoside permease IIC component</fullName>
        </recommendedName>
        <alternativeName>
            <fullName>PTS system beta-glucoside-specific EIIC component</fullName>
        </alternativeName>
    </domain>
    <domain>
        <recommendedName>
            <fullName>Beta-glucoside-specific phosphotransferase enzyme IIA component</fullName>
        </recommendedName>
        <alternativeName>
            <fullName>PTS system beta-glucoside-specific EIIA component</fullName>
        </alternativeName>
    </domain>
</protein>
<sequence length="631" mass="66985">MNYETLASEIRDGVGGQENIISVIHCATRLRFKLRDNTNANADALKNNPGIIMVVESGGQFQVVVGNQVADVYQALLSLDGMARFSDSAAPEEEKKNSLFSGFIDIISSIFTPFVGVMAATGILKGFLALGVATHVISESSGTYKLLFAASDALFYFFPIVLGYTAGKKFGGNPFTTLVIGATLVHPSMIAAFNAMQAPDHSTLHFLGIPITFINYSSSVIPILFASWVSCKLEKPLNRWLHANIRNFFTPLLCIVISVPLTFLLIGPSATWLSQMLAGGYQWLYGLNSLLAGAVMGALWQVCVIFGLHWGFVPLMLNNFSVIGHDTLLPLLVPAVLGQAGATLGVLLRTQDLKRKGIAGSAFSAAIFGITEPAVYGVTLPLRRPFIFGCIGGALGAAVMGYAHTTMYSFGFPSIFSFTQVIPPTGVDSSVWAAVIGTLLAFAFAALTSWSFGVPKDETQPAAADSPAVLAETQANAGAVRDETLFSPLAGEVLLLEQVADRTFASGVMGKGIAIRPTQGRLYAPVDGTVASLFKTHHAIGLASRGGAEVLIHVGIDTVRLDGRYFTPHVRVGDVVRQGDLLLEFDGPAIEAAGYDLTTPIVITNSEDYRGVEPVASGKVDANAPLTQLVC</sequence>
<keyword id="KW-0997">Cell inner membrane</keyword>
<keyword id="KW-1003">Cell membrane</keyword>
<keyword id="KW-0418">Kinase</keyword>
<keyword id="KW-0472">Membrane</keyword>
<keyword id="KW-0598">Phosphotransferase system</keyword>
<keyword id="KW-0762">Sugar transport</keyword>
<keyword id="KW-0808">Transferase</keyword>
<keyword id="KW-0812">Transmembrane</keyword>
<keyword id="KW-1133">Transmembrane helix</keyword>
<keyword id="KW-0813">Transport</keyword>
<evidence type="ECO:0000250" key="1"/>
<evidence type="ECO:0000255" key="2">
    <source>
        <dbReference type="PROSITE-ProRule" id="PRU00416"/>
    </source>
</evidence>
<evidence type="ECO:0000255" key="3">
    <source>
        <dbReference type="PROSITE-ProRule" id="PRU00421"/>
    </source>
</evidence>
<evidence type="ECO:0000255" key="4">
    <source>
        <dbReference type="PROSITE-ProRule" id="PRU00426"/>
    </source>
</evidence>
<evidence type="ECO:0000305" key="5"/>
<organism>
    <name type="scientific">Dickeya chrysanthemi</name>
    <name type="common">Pectobacterium chrysanthemi</name>
    <name type="synonym">Erwinia chrysanthemi</name>
    <dbReference type="NCBI Taxonomy" id="556"/>
    <lineage>
        <taxon>Bacteria</taxon>
        <taxon>Pseudomonadati</taxon>
        <taxon>Pseudomonadota</taxon>
        <taxon>Gammaproteobacteria</taxon>
        <taxon>Enterobacterales</taxon>
        <taxon>Pectobacteriaceae</taxon>
        <taxon>Dickeya</taxon>
    </lineage>
</organism>
<accession>P26207</accession>
<reference key="1">
    <citation type="journal article" date="1992" name="J. Bacteriol.">
        <title>Nucleotide sequences of the arb genes, which control beta-glucoside utilization in Erwinia chrysanthemi: comparison with the Escherichia coli bgl operon and evidence for a new beta-glycohydrolase family including enzymes from eubacteria, archeabacteria, and humans.</title>
        <authorList>
            <person name="el Hassouni M."/>
            <person name="Henrissat B."/>
            <person name="Chippaux M."/>
            <person name="Barras F."/>
        </authorList>
    </citation>
    <scope>NUCLEOTIDE SEQUENCE [GENOMIC DNA]</scope>
</reference>
<gene>
    <name type="primary">arbF</name>
</gene>
<comment type="function">
    <text>The phosphoenolpyruvate-dependent sugar phosphotransferase system (sugar PTS), a major carbohydrate active -transport system, catalyzes the phosphorylation of incoming sugar substrates concomitantly with their translocation across the cell membrane. This system is involved in beta-glucoside transport.</text>
</comment>
<comment type="function">
    <text evidence="1">Acts both as a kinase and as a phosphatase on ArbG.</text>
</comment>
<comment type="subcellular location">
    <subcellularLocation>
        <location evidence="5">Cell inner membrane</location>
        <topology evidence="5">Multi-pass membrane protein</topology>
    </subcellularLocation>
</comment>
<comment type="domain">
    <text>The EIIB domain is phosphorylated by phospho-EIIA on a cysteinyl or histidyl residue, depending on the transported sugar. Then, it transfers the phosphoryl group to the sugar substrate concomitantly with the sugar uptake processed by the EIIC domain.</text>
</comment>
<comment type="domain">
    <text>The EIIC domain forms the PTS system translocation channel and contains the specific substrate-binding site.</text>
</comment>
<comment type="domain">
    <text>The EIIA domain is phosphorylated by phospho-HPr on a histidyl residue. Then, it transfers the phosphoryl group to the EIIB domain.</text>
</comment>
<dbReference type="EC" id="2.7.1.-"/>
<dbReference type="EMBL" id="M81772">
    <property type="protein sequence ID" value="AAA24814.1"/>
    <property type="molecule type" value="Genomic_DNA"/>
</dbReference>
<dbReference type="PIR" id="B42603">
    <property type="entry name" value="B42603"/>
</dbReference>
<dbReference type="SMR" id="P26207"/>
<dbReference type="GO" id="GO:0005886">
    <property type="term" value="C:plasma membrane"/>
    <property type="evidence" value="ECO:0007669"/>
    <property type="project" value="UniProtKB-SubCell"/>
</dbReference>
<dbReference type="GO" id="GO:0016301">
    <property type="term" value="F:kinase activity"/>
    <property type="evidence" value="ECO:0007669"/>
    <property type="project" value="UniProtKB-KW"/>
</dbReference>
<dbReference type="GO" id="GO:0008982">
    <property type="term" value="F:protein-N(PI)-phosphohistidine-sugar phosphotransferase activity"/>
    <property type="evidence" value="ECO:0007669"/>
    <property type="project" value="InterPro"/>
</dbReference>
<dbReference type="GO" id="GO:0090589">
    <property type="term" value="F:protein-phosphocysteine-trehalose phosphotransferase system transporter activity"/>
    <property type="evidence" value="ECO:0007669"/>
    <property type="project" value="TreeGrafter"/>
</dbReference>
<dbReference type="GO" id="GO:0009401">
    <property type="term" value="P:phosphoenolpyruvate-dependent sugar phosphotransferase system"/>
    <property type="evidence" value="ECO:0007669"/>
    <property type="project" value="UniProtKB-KW"/>
</dbReference>
<dbReference type="GO" id="GO:0015771">
    <property type="term" value="P:trehalose transport"/>
    <property type="evidence" value="ECO:0007669"/>
    <property type="project" value="TreeGrafter"/>
</dbReference>
<dbReference type="CDD" id="cd00210">
    <property type="entry name" value="PTS_IIA_glc"/>
    <property type="match status" value="1"/>
</dbReference>
<dbReference type="CDD" id="cd00212">
    <property type="entry name" value="PTS_IIB_glc"/>
    <property type="match status" value="1"/>
</dbReference>
<dbReference type="FunFam" id="2.70.70.10:FF:000001">
    <property type="entry name" value="PTS system glucose-specific IIA component"/>
    <property type="match status" value="1"/>
</dbReference>
<dbReference type="FunFam" id="3.30.1360.60:FF:000001">
    <property type="entry name" value="PTS system glucose-specific IIBC component PtsG"/>
    <property type="match status" value="1"/>
</dbReference>
<dbReference type="Gene3D" id="2.70.70.10">
    <property type="entry name" value="Glucose Permease (Domain IIA)"/>
    <property type="match status" value="1"/>
</dbReference>
<dbReference type="Gene3D" id="3.30.1360.60">
    <property type="entry name" value="Glucose permease domain IIB"/>
    <property type="match status" value="1"/>
</dbReference>
<dbReference type="InterPro" id="IPR011055">
    <property type="entry name" value="Dup_hybrid_motif"/>
</dbReference>
<dbReference type="InterPro" id="IPR036878">
    <property type="entry name" value="Glu_permease_IIB"/>
</dbReference>
<dbReference type="InterPro" id="IPR018113">
    <property type="entry name" value="PTrfase_EIIB_Cys"/>
</dbReference>
<dbReference type="InterPro" id="IPR001127">
    <property type="entry name" value="PTS_EIIA_1_perm"/>
</dbReference>
<dbReference type="InterPro" id="IPR003352">
    <property type="entry name" value="PTS_EIIC"/>
</dbReference>
<dbReference type="InterPro" id="IPR013013">
    <property type="entry name" value="PTS_EIIC_1"/>
</dbReference>
<dbReference type="InterPro" id="IPR011297">
    <property type="entry name" value="PTS_IIABC_b_glu"/>
</dbReference>
<dbReference type="InterPro" id="IPR001996">
    <property type="entry name" value="PTS_IIB_1"/>
</dbReference>
<dbReference type="InterPro" id="IPR050558">
    <property type="entry name" value="PTS_Sugar-Specific_Components"/>
</dbReference>
<dbReference type="NCBIfam" id="NF007335">
    <property type="entry name" value="PRK09824.1"/>
    <property type="match status" value="1"/>
</dbReference>
<dbReference type="NCBIfam" id="TIGR00830">
    <property type="entry name" value="PTBA"/>
    <property type="match status" value="1"/>
</dbReference>
<dbReference type="NCBIfam" id="TIGR01995">
    <property type="entry name" value="PTS-II-ABC-beta"/>
    <property type="match status" value="1"/>
</dbReference>
<dbReference type="PANTHER" id="PTHR30175">
    <property type="entry name" value="PHOSPHOTRANSFERASE SYSTEM TRANSPORT PROTEIN"/>
    <property type="match status" value="1"/>
</dbReference>
<dbReference type="PANTHER" id="PTHR30175:SF1">
    <property type="entry name" value="PTS SYSTEM ARBUTIN-, CELLOBIOSE-, AND SALICIN-SPECIFIC EIIBC COMPONENT-RELATED"/>
    <property type="match status" value="1"/>
</dbReference>
<dbReference type="Pfam" id="PF00358">
    <property type="entry name" value="PTS_EIIA_1"/>
    <property type="match status" value="1"/>
</dbReference>
<dbReference type="Pfam" id="PF00367">
    <property type="entry name" value="PTS_EIIB"/>
    <property type="match status" value="1"/>
</dbReference>
<dbReference type="Pfam" id="PF02378">
    <property type="entry name" value="PTS_EIIC"/>
    <property type="match status" value="1"/>
</dbReference>
<dbReference type="SUPFAM" id="SSF51261">
    <property type="entry name" value="Duplicated hybrid motif"/>
    <property type="match status" value="1"/>
</dbReference>
<dbReference type="SUPFAM" id="SSF55604">
    <property type="entry name" value="Glucose permease domain IIB"/>
    <property type="match status" value="1"/>
</dbReference>
<dbReference type="PROSITE" id="PS51093">
    <property type="entry name" value="PTS_EIIA_TYPE_1"/>
    <property type="match status" value="1"/>
</dbReference>
<dbReference type="PROSITE" id="PS00371">
    <property type="entry name" value="PTS_EIIA_TYPE_1_HIS"/>
    <property type="match status" value="1"/>
</dbReference>
<dbReference type="PROSITE" id="PS51098">
    <property type="entry name" value="PTS_EIIB_TYPE_1"/>
    <property type="match status" value="1"/>
</dbReference>
<dbReference type="PROSITE" id="PS01035">
    <property type="entry name" value="PTS_EIIB_TYPE_1_CYS"/>
    <property type="match status" value="1"/>
</dbReference>
<dbReference type="PROSITE" id="PS51103">
    <property type="entry name" value="PTS_EIIC_TYPE_1"/>
    <property type="match status" value="1"/>
</dbReference>